<organism>
    <name type="scientific">Escherichia coli O9:H4 (strain HS)</name>
    <dbReference type="NCBI Taxonomy" id="331112"/>
    <lineage>
        <taxon>Bacteria</taxon>
        <taxon>Pseudomonadati</taxon>
        <taxon>Pseudomonadota</taxon>
        <taxon>Gammaproteobacteria</taxon>
        <taxon>Enterobacterales</taxon>
        <taxon>Enterobacteriaceae</taxon>
        <taxon>Escherichia</taxon>
    </lineage>
</organism>
<name>SPED_ECOHS</name>
<gene>
    <name evidence="1" type="primary">speD</name>
    <name type="ordered locus">EcHS_A0124</name>
</gene>
<proteinExistence type="inferred from homology"/>
<comment type="function">
    <text evidence="1">Catalyzes the decarboxylation of S-adenosylmethionine to S-adenosylmethioninamine (dcAdoMet), the propylamine donor required for the synthesis of the polyamines spermine and spermidine from the diamine putrescine.</text>
</comment>
<comment type="catalytic activity">
    <reaction evidence="1">
        <text>S-adenosyl-L-methionine + H(+) = S-adenosyl 3-(methylsulfanyl)propylamine + CO2</text>
        <dbReference type="Rhea" id="RHEA:15981"/>
        <dbReference type="ChEBI" id="CHEBI:15378"/>
        <dbReference type="ChEBI" id="CHEBI:16526"/>
        <dbReference type="ChEBI" id="CHEBI:57443"/>
        <dbReference type="ChEBI" id="CHEBI:59789"/>
        <dbReference type="EC" id="4.1.1.50"/>
    </reaction>
</comment>
<comment type="cofactor">
    <cofactor evidence="1">
        <name>pyruvate</name>
        <dbReference type="ChEBI" id="CHEBI:15361"/>
    </cofactor>
    <text evidence="1">Binds 1 pyruvoyl group covalently per subunit.</text>
</comment>
<comment type="pathway">
    <text evidence="1">Amine and polyamine biosynthesis; S-adenosylmethioninamine biosynthesis; S-adenosylmethioninamine from S-adenosyl-L-methionine: step 1/1.</text>
</comment>
<comment type="subunit">
    <text evidence="1">Heterooctamer of four alpha and four beta chains arranged as a tetramer of alpha/beta heterodimers.</text>
</comment>
<comment type="PTM">
    <text evidence="1">Is synthesized initially as an inactive proenzyme. Formation of the active enzyme involves a self-maturation process in which the active site pyruvoyl group is generated from an internal serine residue via an autocatalytic post-translational modification. Two non-identical subunits are generated from the proenzyme in this reaction, and the pyruvate is formed at the N-terminus of the alpha chain, which is derived from the carboxyl end of the proenzyme. The post-translation cleavage follows an unusual pathway, termed non-hydrolytic serinolysis, in which the side chain hydroxyl group of the serine supplies its oxygen atom to form the C-terminus of the beta chain, while the remainder of the serine residue undergoes an oxidative deamination to produce ammonia and the pyruvoyl group blocking the N-terminus of the alpha chain.</text>
</comment>
<comment type="similarity">
    <text evidence="1">Belongs to the prokaryotic AdoMetDC family. Type 2 subfamily.</text>
</comment>
<keyword id="KW-0068">Autocatalytic cleavage</keyword>
<keyword id="KW-0210">Decarboxylase</keyword>
<keyword id="KW-0456">Lyase</keyword>
<keyword id="KW-0620">Polyamine biosynthesis</keyword>
<keyword id="KW-0670">Pyruvate</keyword>
<keyword id="KW-0949">S-adenosyl-L-methionine</keyword>
<keyword id="KW-0704">Schiff base</keyword>
<keyword id="KW-0745">Spermidine biosynthesis</keyword>
<keyword id="KW-0865">Zymogen</keyword>
<protein>
    <recommendedName>
        <fullName evidence="1">S-adenosylmethionine decarboxylase proenzyme</fullName>
        <shortName evidence="1">AdoMetDC</shortName>
        <shortName evidence="1">SAMDC</shortName>
        <ecNumber evidence="1">4.1.1.50</ecNumber>
    </recommendedName>
    <component>
        <recommendedName>
            <fullName evidence="1">S-adenosylmethionine decarboxylase beta chain</fullName>
        </recommendedName>
    </component>
    <component>
        <recommendedName>
            <fullName evidence="1">S-adenosylmethionine decarboxylase alpha chain</fullName>
        </recommendedName>
    </component>
</protein>
<sequence>MKKLKLHGFNNLTKSLSFCIYDICYAKTAEERDGYIAYIDELYNANRLTEILSETCSIIGANILNIARQDYEPQGASVTILVSEEPVDPKLIDKTEHPGPLPETVVAHLDKSHICVHTYPESHPEGGLCTFRADIEVSTCGVISPLKALNYLIHQLESDIVTIDYRVRGFTRDINGMKHFIDHEINSIQNFMSDDMKALYDMVDVNVYQENIFHTKMLLKEFDLKHYMFHTKPEDLTDSERQEITAALWKEMREIYYGRNMPAV</sequence>
<evidence type="ECO:0000255" key="1">
    <source>
        <dbReference type="HAMAP-Rule" id="MF_00465"/>
    </source>
</evidence>
<reference key="1">
    <citation type="journal article" date="2008" name="J. Bacteriol.">
        <title>The pangenome structure of Escherichia coli: comparative genomic analysis of E. coli commensal and pathogenic isolates.</title>
        <authorList>
            <person name="Rasko D.A."/>
            <person name="Rosovitz M.J."/>
            <person name="Myers G.S.A."/>
            <person name="Mongodin E.F."/>
            <person name="Fricke W.F."/>
            <person name="Gajer P."/>
            <person name="Crabtree J."/>
            <person name="Sebaihia M."/>
            <person name="Thomson N.R."/>
            <person name="Chaudhuri R."/>
            <person name="Henderson I.R."/>
            <person name="Sperandio V."/>
            <person name="Ravel J."/>
        </authorList>
    </citation>
    <scope>NUCLEOTIDE SEQUENCE [LARGE SCALE GENOMIC DNA]</scope>
    <source>
        <strain>HS</strain>
    </source>
</reference>
<dbReference type="EC" id="4.1.1.50" evidence="1"/>
<dbReference type="EMBL" id="CP000802">
    <property type="protein sequence ID" value="ABV04523.1"/>
    <property type="molecule type" value="Genomic_DNA"/>
</dbReference>
<dbReference type="RefSeq" id="WP_000734287.1">
    <property type="nucleotide sequence ID" value="NC_009800.1"/>
</dbReference>
<dbReference type="GeneID" id="93777316"/>
<dbReference type="KEGG" id="ecx:EcHS_A0124"/>
<dbReference type="HOGENOM" id="CLU_092007_0_0_6"/>
<dbReference type="UniPathway" id="UPA00331">
    <property type="reaction ID" value="UER00451"/>
</dbReference>
<dbReference type="GO" id="GO:0005829">
    <property type="term" value="C:cytosol"/>
    <property type="evidence" value="ECO:0007669"/>
    <property type="project" value="TreeGrafter"/>
</dbReference>
<dbReference type="GO" id="GO:0004014">
    <property type="term" value="F:adenosylmethionine decarboxylase activity"/>
    <property type="evidence" value="ECO:0007669"/>
    <property type="project" value="UniProtKB-UniRule"/>
</dbReference>
<dbReference type="GO" id="GO:0008295">
    <property type="term" value="P:spermidine biosynthetic process"/>
    <property type="evidence" value="ECO:0007669"/>
    <property type="project" value="UniProtKB-UniRule"/>
</dbReference>
<dbReference type="FunFam" id="3.60.90.10:FF:000001">
    <property type="entry name" value="S-adenosylmethionine decarboxylase proenzyme"/>
    <property type="match status" value="1"/>
</dbReference>
<dbReference type="Gene3D" id="3.60.90.10">
    <property type="entry name" value="S-adenosylmethionine decarboxylase"/>
    <property type="match status" value="1"/>
</dbReference>
<dbReference type="HAMAP" id="MF_00465">
    <property type="entry name" value="AdoMetDC_2"/>
    <property type="match status" value="1"/>
</dbReference>
<dbReference type="InterPro" id="IPR003826">
    <property type="entry name" value="AdoMetDC_fam_prok"/>
</dbReference>
<dbReference type="InterPro" id="IPR009165">
    <property type="entry name" value="S-AdoMet_deCO2ase_bac"/>
</dbReference>
<dbReference type="InterPro" id="IPR016067">
    <property type="entry name" value="S-AdoMet_deCO2ase_core"/>
</dbReference>
<dbReference type="NCBIfam" id="TIGR03331">
    <property type="entry name" value="SAM_DCase_Eco"/>
    <property type="match status" value="1"/>
</dbReference>
<dbReference type="PANTHER" id="PTHR33866">
    <property type="entry name" value="S-ADENOSYLMETHIONINE DECARBOXYLASE PROENZYME"/>
    <property type="match status" value="1"/>
</dbReference>
<dbReference type="PANTHER" id="PTHR33866:SF1">
    <property type="entry name" value="S-ADENOSYLMETHIONINE DECARBOXYLASE PROENZYME"/>
    <property type="match status" value="1"/>
</dbReference>
<dbReference type="Pfam" id="PF02675">
    <property type="entry name" value="AdoMet_dc"/>
    <property type="match status" value="1"/>
</dbReference>
<dbReference type="PIRSF" id="PIRSF001356">
    <property type="entry name" value="SAM_decarboxylas"/>
    <property type="match status" value="1"/>
</dbReference>
<dbReference type="SUPFAM" id="SSF56276">
    <property type="entry name" value="S-adenosylmethionine decarboxylase"/>
    <property type="match status" value="1"/>
</dbReference>
<feature type="chain" id="PRO_1000060353" description="S-adenosylmethionine decarboxylase beta chain" evidence="1">
    <location>
        <begin position="1"/>
        <end position="111"/>
    </location>
</feature>
<feature type="chain" id="PRO_1000060354" description="S-adenosylmethionine decarboxylase alpha chain" evidence="1">
    <location>
        <begin position="112"/>
        <end position="264"/>
    </location>
</feature>
<feature type="active site" description="Schiff-base intermediate with substrate; via pyruvic acid" evidence="1">
    <location>
        <position position="112"/>
    </location>
</feature>
<feature type="active site" description="Proton acceptor; for processing activity" evidence="1">
    <location>
        <position position="117"/>
    </location>
</feature>
<feature type="active site" description="Proton donor; for catalytic activity" evidence="1">
    <location>
        <position position="140"/>
    </location>
</feature>
<feature type="site" description="Cleavage (non-hydrolytic); by autolysis" evidence="1">
    <location>
        <begin position="111"/>
        <end position="112"/>
    </location>
</feature>
<feature type="modified residue" description="Pyruvic acid (Ser); by autocatalysis" evidence="1">
    <location>
        <position position="112"/>
    </location>
</feature>
<accession>A7ZW69</accession>